<organism>
    <name type="scientific">Saccharomyces cerevisiae (strain ATCC 204508 / S288c)</name>
    <name type="common">Baker's yeast</name>
    <dbReference type="NCBI Taxonomy" id="559292"/>
    <lineage>
        <taxon>Eukaryota</taxon>
        <taxon>Fungi</taxon>
        <taxon>Dikarya</taxon>
        <taxon>Ascomycota</taxon>
        <taxon>Saccharomycotina</taxon>
        <taxon>Saccharomycetes</taxon>
        <taxon>Saccharomycetales</taxon>
        <taxon>Saccharomycetaceae</taxon>
        <taxon>Saccharomyces</taxon>
    </lineage>
</organism>
<dbReference type="EC" id="3.2.1.101"/>
<dbReference type="EMBL" id="Z49939">
    <property type="protein sequence ID" value="CAA90209.1"/>
    <property type="molecule type" value="Genomic_DNA"/>
</dbReference>
<dbReference type="EMBL" id="BK006946">
    <property type="protein sequence ID" value="DAA10138.1"/>
    <property type="molecule type" value="Genomic_DNA"/>
</dbReference>
<dbReference type="PIR" id="S57605">
    <property type="entry name" value="S57605"/>
</dbReference>
<dbReference type="RefSeq" id="NP_013965.1">
    <property type="nucleotide sequence ID" value="NM_001182745.1"/>
</dbReference>
<dbReference type="SMR" id="Q05031"/>
<dbReference type="BioGRID" id="35416">
    <property type="interactions" value="135"/>
</dbReference>
<dbReference type="DIP" id="DIP-2739N"/>
<dbReference type="FunCoup" id="Q05031">
    <property type="interactions" value="49"/>
</dbReference>
<dbReference type="IntAct" id="Q05031">
    <property type="interactions" value="16"/>
</dbReference>
<dbReference type="MINT" id="Q05031"/>
<dbReference type="STRING" id="4932.YMR238W"/>
<dbReference type="CAZy" id="GH76">
    <property type="family name" value="Glycoside Hydrolase Family 76"/>
</dbReference>
<dbReference type="GlyCosmos" id="Q05031">
    <property type="glycosylation" value="9 sites, No reported glycans"/>
</dbReference>
<dbReference type="GlyGen" id="Q05031">
    <property type="glycosylation" value="9 sites"/>
</dbReference>
<dbReference type="PaxDb" id="4932-YMR238W"/>
<dbReference type="PeptideAtlas" id="Q05031"/>
<dbReference type="EnsemblFungi" id="YMR238W_mRNA">
    <property type="protein sequence ID" value="YMR238W"/>
    <property type="gene ID" value="YMR238W"/>
</dbReference>
<dbReference type="GeneID" id="855278"/>
<dbReference type="KEGG" id="sce:YMR238W"/>
<dbReference type="AGR" id="SGD:S000004851"/>
<dbReference type="SGD" id="S000004851">
    <property type="gene designation" value="DFG5"/>
</dbReference>
<dbReference type="VEuPathDB" id="FungiDB:YMR238W"/>
<dbReference type="eggNOG" id="ENOG502QWHG">
    <property type="taxonomic scope" value="Eukaryota"/>
</dbReference>
<dbReference type="HOGENOM" id="CLU_025694_1_2_1"/>
<dbReference type="InParanoid" id="Q05031"/>
<dbReference type="OMA" id="GMFQPPY"/>
<dbReference type="OrthoDB" id="4187847at2759"/>
<dbReference type="BioCyc" id="YEAST:G3O-32919-MONOMER"/>
<dbReference type="BioGRID-ORCS" id="855278">
    <property type="hits" value="1 hit in 10 CRISPR screens"/>
</dbReference>
<dbReference type="PRO" id="PR:Q05031"/>
<dbReference type="Proteomes" id="UP000002311">
    <property type="component" value="Chromosome XIII"/>
</dbReference>
<dbReference type="RNAct" id="Q05031">
    <property type="molecule type" value="protein"/>
</dbReference>
<dbReference type="GO" id="GO:0005783">
    <property type="term" value="C:endoplasmic reticulum"/>
    <property type="evidence" value="ECO:0007005"/>
    <property type="project" value="SGD"/>
</dbReference>
<dbReference type="GO" id="GO:0005886">
    <property type="term" value="C:plasma membrane"/>
    <property type="evidence" value="ECO:0000247"/>
    <property type="project" value="SGD"/>
</dbReference>
<dbReference type="GO" id="GO:0098552">
    <property type="term" value="C:side of membrane"/>
    <property type="evidence" value="ECO:0007669"/>
    <property type="project" value="UniProtKB-KW"/>
</dbReference>
<dbReference type="GO" id="GO:0008496">
    <property type="term" value="F:mannan endo-1,6-alpha-mannosidase activity"/>
    <property type="evidence" value="ECO:0007669"/>
    <property type="project" value="UniProtKB-EC"/>
</dbReference>
<dbReference type="GO" id="GO:0007117">
    <property type="term" value="P:budding cell bud growth"/>
    <property type="evidence" value="ECO:0000316"/>
    <property type="project" value="SGD"/>
</dbReference>
<dbReference type="GO" id="GO:0016052">
    <property type="term" value="P:carbohydrate catabolic process"/>
    <property type="evidence" value="ECO:0007669"/>
    <property type="project" value="InterPro"/>
</dbReference>
<dbReference type="GO" id="GO:0071555">
    <property type="term" value="P:cell wall organization"/>
    <property type="evidence" value="ECO:0007669"/>
    <property type="project" value="UniProtKB-KW"/>
</dbReference>
<dbReference type="GO" id="GO:0009272">
    <property type="term" value="P:fungal-type cell wall biogenesis"/>
    <property type="evidence" value="ECO:0000314"/>
    <property type="project" value="SGD"/>
</dbReference>
<dbReference type="GO" id="GO:0007124">
    <property type="term" value="P:pseudohyphal growth"/>
    <property type="evidence" value="ECO:0000315"/>
    <property type="project" value="SGD"/>
</dbReference>
<dbReference type="FunFam" id="1.50.10.20:FF:000006">
    <property type="entry name" value="Mannan endo-1,6-alpha-mannosidase"/>
    <property type="match status" value="1"/>
</dbReference>
<dbReference type="Gene3D" id="1.50.10.20">
    <property type="match status" value="1"/>
</dbReference>
<dbReference type="InterPro" id="IPR008928">
    <property type="entry name" value="6-hairpin_glycosidase_sf"/>
</dbReference>
<dbReference type="InterPro" id="IPR005198">
    <property type="entry name" value="Glyco_hydro_76"/>
</dbReference>
<dbReference type="InterPro" id="IPR014480">
    <property type="entry name" value="Mannan-1_6-alpha_mannosidase"/>
</dbReference>
<dbReference type="PANTHER" id="PTHR12145">
    <property type="entry name" value="MANNAN ENDO-1,6-ALPHA-MANNOSIDASE DCW1"/>
    <property type="match status" value="1"/>
</dbReference>
<dbReference type="PANTHER" id="PTHR12145:SF21">
    <property type="entry name" value="MANNAN ENDO-1,6-ALPHA-MANNOSIDASE DFG5"/>
    <property type="match status" value="1"/>
</dbReference>
<dbReference type="Pfam" id="PF03663">
    <property type="entry name" value="Glyco_hydro_76"/>
    <property type="match status" value="1"/>
</dbReference>
<dbReference type="PIRSF" id="PIRSF016302">
    <property type="entry name" value="Man_a_manosd"/>
    <property type="match status" value="1"/>
</dbReference>
<dbReference type="SUPFAM" id="SSF48208">
    <property type="entry name" value="Six-hairpin glycosidases"/>
    <property type="match status" value="1"/>
</dbReference>
<reference key="1">
    <citation type="journal article" date="1997" name="Nature">
        <title>The nucleotide sequence of Saccharomyces cerevisiae chromosome XIII.</title>
        <authorList>
            <person name="Bowman S."/>
            <person name="Churcher C.M."/>
            <person name="Badcock K."/>
            <person name="Brown D."/>
            <person name="Chillingworth T."/>
            <person name="Connor R."/>
            <person name="Dedman K."/>
            <person name="Devlin K."/>
            <person name="Gentles S."/>
            <person name="Hamlin N."/>
            <person name="Hunt S."/>
            <person name="Jagels K."/>
            <person name="Lye G."/>
            <person name="Moule S."/>
            <person name="Odell C."/>
            <person name="Pearson D."/>
            <person name="Rajandream M.A."/>
            <person name="Rice P."/>
            <person name="Skelton J."/>
            <person name="Walsh S.V."/>
            <person name="Whitehead S."/>
            <person name="Barrell B.G."/>
        </authorList>
    </citation>
    <scope>NUCLEOTIDE SEQUENCE [LARGE SCALE GENOMIC DNA]</scope>
    <source>
        <strain>ATCC 204508 / S288c</strain>
    </source>
</reference>
<reference key="2">
    <citation type="journal article" date="2014" name="G3 (Bethesda)">
        <title>The reference genome sequence of Saccharomyces cerevisiae: Then and now.</title>
        <authorList>
            <person name="Engel S.R."/>
            <person name="Dietrich F.S."/>
            <person name="Fisk D.G."/>
            <person name="Binkley G."/>
            <person name="Balakrishnan R."/>
            <person name="Costanzo M.C."/>
            <person name="Dwight S.S."/>
            <person name="Hitz B.C."/>
            <person name="Karra K."/>
            <person name="Nash R.S."/>
            <person name="Weng S."/>
            <person name="Wong E.D."/>
            <person name="Lloyd P."/>
            <person name="Skrzypek M.S."/>
            <person name="Miyasato S.R."/>
            <person name="Simison M."/>
            <person name="Cherry J.M."/>
        </authorList>
    </citation>
    <scope>GENOME REANNOTATION</scope>
    <source>
        <strain>ATCC 204508 / S288c</strain>
    </source>
</reference>
<reference key="3">
    <citation type="journal article" date="2002" name="Mol. Microbiol.">
        <title>Two homologous genes, DCW1 (YKL046c) and DFG5, are essential for cell growth and encode glycosylphosphatidylinositol (GPI)-anchored membrane proteins required for cell wall biogenesis in Saccharomyces cerevisiae.</title>
        <authorList>
            <person name="Kitagaki H."/>
            <person name="Wu H."/>
            <person name="Shimoi H."/>
            <person name="Ito K."/>
        </authorList>
    </citation>
    <scope>FUNCTION</scope>
    <scope>GLYCOSYLATION</scope>
    <scope>SUBCELLULAR LOCATION</scope>
</reference>
<reference key="4">
    <citation type="journal article" date="2003" name="Nature">
        <title>Global analysis of protein expression in yeast.</title>
        <authorList>
            <person name="Ghaemmaghami S."/>
            <person name="Huh W.-K."/>
            <person name="Bower K."/>
            <person name="Howson R.W."/>
            <person name="Belle A."/>
            <person name="Dephoure N."/>
            <person name="O'Shea E.K."/>
            <person name="Weissman J.S."/>
        </authorList>
    </citation>
    <scope>LEVEL OF PROTEIN EXPRESSION [LARGE SCALE ANALYSIS]</scope>
</reference>
<reference key="5">
    <citation type="journal article" date="2009" name="Mol. Syst. Biol.">
        <title>Global analysis of the glycoproteome in Saccharomyces cerevisiae reveals new roles for protein glycosylation in eukaryotes.</title>
        <authorList>
            <person name="Kung L.A."/>
            <person name="Tao S.-C."/>
            <person name="Qian J."/>
            <person name="Smith M.G."/>
            <person name="Snyder M."/>
            <person name="Zhu H."/>
        </authorList>
    </citation>
    <scope>GLYCOSYLATION [LARGE SCALE ANALYSIS]</scope>
</reference>
<gene>
    <name type="primary">DFG5</name>
    <name type="ordered locus">YMR238W</name>
    <name type="ORF">YM9959.20</name>
</gene>
<accession>Q05031</accession>
<accession>D6W064</accession>
<name>DFG5_YEAST</name>
<sequence>MIVNISAKMILSICFTFLSFFKATHAMDLDTTSKTSICDATALIQGGMLDYYEGTRYGGTVGMFQSPYYWWHAGEAFGGMLENWFLCENDTYQELLYDALLAQTGSNYDYIPSNQTMVEGNDDQGIWGITVMGAVERNFTDPGDGKPGWLAMVQAVFNTMYSRWDSEHCGGGLRWQIFTWNSGYNYKNTVSNACLFQIAARLGRYTGNTTYLEVAEQVFDWLVDVGYVVLNDTANVFDGAEIDTNCTDITKIEWTYNHGIVLGGLAYMYNATNGTGEWETSLTKILNGAKSYFFKDSIMYESACQDYGTCNTDQRTFKSIFSRMLGLTSVMAPFTRDTIDDLIKTSAEAAAKSCNGGTDGHTCGLNWQKQTNDGYYGLGEQMSALEVIQNLLIHDRPAPYKEDNGGTSKGDANAGMNSSTTNVLQNNLNIKKGDRAGAAIITAVILSVLTGGAVWMLF</sequence>
<proteinExistence type="evidence at protein level"/>
<feature type="signal peptide" evidence="1">
    <location>
        <begin position="1"/>
        <end position="26"/>
    </location>
</feature>
<feature type="chain" id="PRO_0000012127" description="Mannan endo-1,6-alpha-mannosidase DFG5">
    <location>
        <begin position="27"/>
        <end position="437"/>
    </location>
</feature>
<feature type="propeptide" id="PRO_0000012128" description="Removed in mature form" evidence="1">
    <location>
        <begin position="438"/>
        <end position="458"/>
    </location>
</feature>
<feature type="region of interest" description="Disordered" evidence="2">
    <location>
        <begin position="399"/>
        <end position="418"/>
    </location>
</feature>
<feature type="lipid moiety-binding region" description="GPI-anchor amidated glycine" evidence="1">
    <location>
        <position position="437"/>
    </location>
</feature>
<feature type="glycosylation site" description="N-linked (GlcNAc...) asparagine" evidence="1">
    <location>
        <position position="89"/>
    </location>
</feature>
<feature type="glycosylation site" description="N-linked (GlcNAc...) asparagine" evidence="1">
    <location>
        <position position="114"/>
    </location>
</feature>
<feature type="glycosylation site" description="N-linked (GlcNAc...) asparagine" evidence="1">
    <location>
        <position position="138"/>
    </location>
</feature>
<feature type="glycosylation site" description="N-linked (GlcNAc...) asparagine" evidence="1">
    <location>
        <position position="208"/>
    </location>
</feature>
<feature type="glycosylation site" description="N-linked (GlcNAc...) asparagine" evidence="1">
    <location>
        <position position="231"/>
    </location>
</feature>
<feature type="glycosylation site" description="N-linked (GlcNAc...) asparagine" evidence="1">
    <location>
        <position position="245"/>
    </location>
</feature>
<feature type="glycosylation site" description="N-linked (GlcNAc...) asparagine" evidence="1">
    <location>
        <position position="270"/>
    </location>
</feature>
<feature type="glycosylation site" description="N-linked (GlcNAc...) asparagine" evidence="1">
    <location>
        <position position="273"/>
    </location>
</feature>
<feature type="glycosylation site" description="N-linked (GlcNAc...) asparagine" evidence="1">
    <location>
        <position position="417"/>
    </location>
</feature>
<evidence type="ECO:0000255" key="1"/>
<evidence type="ECO:0000256" key="2">
    <source>
        <dbReference type="SAM" id="MobiDB-lite"/>
    </source>
</evidence>
<evidence type="ECO:0000269" key="3">
    <source>
    </source>
</evidence>
<evidence type="ECO:0000269" key="4">
    <source>
    </source>
</evidence>
<evidence type="ECO:0000269" key="5">
    <source>
    </source>
</evidence>
<evidence type="ECO:0000305" key="6"/>
<comment type="function">
    <text evidence="3">Required for normal synthesis of the cell wall.</text>
</comment>
<comment type="catalytic activity">
    <reaction>
        <text>Random hydrolysis of (1-&gt;6)-alpha-D-mannosidic linkages in unbranched (1-&gt;6)-mannans.</text>
        <dbReference type="EC" id="3.2.1.101"/>
    </reaction>
</comment>
<comment type="interaction">
    <interactant intactId="EBI-27512">
        <id>Q05031</id>
    </interactant>
    <interactant intactId="EBI-34916">
        <id>Q06144</id>
        <label>ORM2</label>
    </interactant>
    <organismsDiffer>false</organismsDiffer>
    <experiments>3</experiments>
</comment>
<comment type="subcellular location">
    <subcellularLocation>
        <location evidence="3">Cell membrane</location>
        <topology evidence="3">Lipid-anchor</topology>
        <topology evidence="3">GPI-anchor</topology>
    </subcellularLocation>
    <text>GPI-anchored plasma membrane protein (GPI-PMP).</text>
</comment>
<comment type="PTM">
    <text evidence="3 5">N-glycosylated.</text>
</comment>
<comment type="miscellaneous">
    <text evidence="4">Present with 2950 molecules/cell in log phase SD medium.</text>
</comment>
<comment type="similarity">
    <text evidence="6">Belongs to the glycosyl hydrolase 76 family.</text>
</comment>
<keyword id="KW-1003">Cell membrane</keyword>
<keyword id="KW-0961">Cell wall biogenesis/degradation</keyword>
<keyword id="KW-0325">Glycoprotein</keyword>
<keyword id="KW-0326">Glycosidase</keyword>
<keyword id="KW-0336">GPI-anchor</keyword>
<keyword id="KW-0378">Hydrolase</keyword>
<keyword id="KW-0449">Lipoprotein</keyword>
<keyword id="KW-0472">Membrane</keyword>
<keyword id="KW-1185">Reference proteome</keyword>
<keyword id="KW-0732">Signal</keyword>
<protein>
    <recommendedName>
        <fullName>Mannan endo-1,6-alpha-mannosidase DFG5</fullName>
        <ecNumber>3.2.1.101</ecNumber>
    </recommendedName>
    <alternativeName>
        <fullName>Endo-alpha-1-&gt;6-D-mannanase DFG5</fullName>
    </alternativeName>
</protein>